<sequence length="239" mass="26696">MGSTSDPSPSIITVAAEAPVTAERKQNLHLQEQLAKPYVARALAAVDPAHPNGTEGHEHHNMSVLQQRAAFFDRNNDGIVYPWETYQGFRAVGFGVLTSILGGFLINLGLSYRSQPSWIPSPVLSIHIKNIHRCKHGSDTESYDTEGRFEPSKFDAIFSKYALTQPDALTSEEISTMLQVNRNLLDFIGWVASIAEWRLLYQIGKDEDGLLHKETIRGAFDGSLFERLEKDRASRTKIV</sequence>
<evidence type="ECO:0000250" key="1">
    <source>
        <dbReference type="UniProtKB" id="O22788"/>
    </source>
</evidence>
<evidence type="ECO:0000250" key="2">
    <source>
        <dbReference type="UniProtKB" id="O81270"/>
    </source>
</evidence>
<evidence type="ECO:0000250" key="3">
    <source>
        <dbReference type="UniProtKB" id="Q9SQ57"/>
    </source>
</evidence>
<evidence type="ECO:0000255" key="4"/>
<evidence type="ECO:0000255" key="5">
    <source>
        <dbReference type="PROSITE-ProRule" id="PRU00448"/>
    </source>
</evidence>
<evidence type="ECO:0000269" key="6">
    <source>
    </source>
</evidence>
<evidence type="ECO:0000303" key="7">
    <source>
    </source>
</evidence>
<evidence type="ECO:0000305" key="8"/>
<evidence type="ECO:0000305" key="9">
    <source>
    </source>
</evidence>
<evidence type="ECO:0000312" key="10">
    <source>
        <dbReference type="EMBL" id="ABK40508.1"/>
    </source>
</evidence>
<feature type="initiator methionine" description="Removed" evidence="2">
    <location>
        <position position="1"/>
    </location>
</feature>
<feature type="chain" id="PRO_0000450063" description="Peroxygenase">
    <location>
        <begin position="2"/>
        <end position="239"/>
    </location>
</feature>
<feature type="domain" description="EF-hand" evidence="5">
    <location>
        <begin position="60"/>
        <end position="95"/>
    </location>
</feature>
<feature type="short sequence motif" description="Proline-knot" evidence="9">
    <location>
        <begin position="116"/>
        <end position="125"/>
    </location>
</feature>
<feature type="binding site" evidence="4">
    <location>
        <position position="73"/>
    </location>
    <ligand>
        <name>Ca(2+)</name>
        <dbReference type="ChEBI" id="CHEBI:29108"/>
    </ligand>
</feature>
<feature type="binding site" evidence="4">
    <location>
        <position position="75"/>
    </location>
    <ligand>
        <name>Ca(2+)</name>
        <dbReference type="ChEBI" id="CHEBI:29108"/>
    </ligand>
</feature>
<feature type="binding site" evidence="4">
    <location>
        <position position="77"/>
    </location>
    <ligand>
        <name>Ca(2+)</name>
        <dbReference type="ChEBI" id="CHEBI:29108"/>
    </ligand>
</feature>
<feature type="binding site" evidence="4">
    <location>
        <position position="84"/>
    </location>
    <ligand>
        <name>Ca(2+)</name>
        <dbReference type="ChEBI" id="CHEBI:29108"/>
    </ligand>
</feature>
<feature type="modified residue" description="N-acetylglycine" evidence="2">
    <location>
        <position position="2"/>
    </location>
</feature>
<dbReference type="EC" id="1.11.2.3" evidence="2"/>
<dbReference type="EMBL" id="EF015588">
    <property type="protein sequence ID" value="ABK40508.1"/>
    <property type="molecule type" value="mRNA"/>
</dbReference>
<dbReference type="GO" id="GO:0005783">
    <property type="term" value="C:endoplasmic reticulum"/>
    <property type="evidence" value="ECO:0007669"/>
    <property type="project" value="UniProtKB-KW"/>
</dbReference>
<dbReference type="GO" id="GO:0016020">
    <property type="term" value="C:membrane"/>
    <property type="evidence" value="ECO:0007669"/>
    <property type="project" value="UniProtKB-KW"/>
</dbReference>
<dbReference type="GO" id="GO:0012511">
    <property type="term" value="C:monolayer-surrounded lipid storage body"/>
    <property type="evidence" value="ECO:0000314"/>
    <property type="project" value="UniProtKB"/>
</dbReference>
<dbReference type="GO" id="GO:0005509">
    <property type="term" value="F:calcium ion binding"/>
    <property type="evidence" value="ECO:0000250"/>
    <property type="project" value="UniProtKB"/>
</dbReference>
<dbReference type="GO" id="GO:0020037">
    <property type="term" value="F:heme binding"/>
    <property type="evidence" value="ECO:0000250"/>
    <property type="project" value="UniProtKB"/>
</dbReference>
<dbReference type="GO" id="GO:0004497">
    <property type="term" value="F:monooxygenase activity"/>
    <property type="evidence" value="ECO:0007669"/>
    <property type="project" value="TreeGrafter"/>
</dbReference>
<dbReference type="GO" id="GO:1990137">
    <property type="term" value="F:plant seed peroxygenase activity"/>
    <property type="evidence" value="ECO:0000250"/>
    <property type="project" value="UniProtKB"/>
</dbReference>
<dbReference type="GO" id="GO:0042803">
    <property type="term" value="F:protein homodimerization activity"/>
    <property type="evidence" value="ECO:0000250"/>
    <property type="project" value="UniProtKB"/>
</dbReference>
<dbReference type="GO" id="GO:0010888">
    <property type="term" value="P:negative regulation of lipid storage"/>
    <property type="evidence" value="ECO:0000250"/>
    <property type="project" value="UniProtKB"/>
</dbReference>
<dbReference type="InterPro" id="IPR007736">
    <property type="entry name" value="Caleosin-related"/>
</dbReference>
<dbReference type="PANTHER" id="PTHR31495:SF34">
    <property type="entry name" value="OS03G0222600 PROTEIN"/>
    <property type="match status" value="1"/>
</dbReference>
<dbReference type="PANTHER" id="PTHR31495">
    <property type="entry name" value="PEROXYGENASE 3-RELATED"/>
    <property type="match status" value="1"/>
</dbReference>
<dbReference type="Pfam" id="PF05042">
    <property type="entry name" value="Caleosin"/>
    <property type="match status" value="1"/>
</dbReference>
<name>PXG_LILLO</name>
<proteinExistence type="evidence at protein level"/>
<organism evidence="10">
    <name type="scientific">Lilium longiflorum</name>
    <name type="common">Trumpet lily</name>
    <dbReference type="NCBI Taxonomy" id="4690"/>
    <lineage>
        <taxon>Eukaryota</taxon>
        <taxon>Viridiplantae</taxon>
        <taxon>Streptophyta</taxon>
        <taxon>Embryophyta</taxon>
        <taxon>Tracheophyta</taxon>
        <taxon>Spermatophyta</taxon>
        <taxon>Magnoliopsida</taxon>
        <taxon>Liliopsida</taxon>
        <taxon>Liliales</taxon>
        <taxon>Liliaceae</taxon>
        <taxon>Lilium</taxon>
    </lineage>
</organism>
<protein>
    <recommendedName>
        <fullName evidence="8">Peroxygenase</fullName>
        <ecNumber evidence="2">1.11.2.3</ecNumber>
    </recommendedName>
    <alternativeName>
        <fullName evidence="7">Caleosin</fullName>
    </alternativeName>
</protein>
<reference evidence="10" key="1">
    <citation type="journal article" date="2008" name="Plant Cell Physiol.">
        <title>A unique caleosin in oil bodies of lily pollen.</title>
        <authorList>
            <person name="Jiang P.L."/>
            <person name="Jauh G.Y."/>
            <person name="Wang C.S."/>
            <person name="Tzen J.T."/>
        </authorList>
    </citation>
    <scope>NUCLEOTIDE SEQUENCE [MRNA]</scope>
    <scope>PROTEIN SEQUENCE OF 69-74; 136-148; 149-153; 154-160; 199-205; 206-213 AND 218-227</scope>
    <scope>SUBCELLULAR LOCATION</scope>
    <scope>TISSUE SPECIFICITY</scope>
    <scope>IDENTIFICATION BY MASS SPECTROMETRY</scope>
    <source>
        <strain evidence="7">cv. Snow Queen</strain>
        <tissue evidence="7">Pollen</tissue>
    </source>
</reference>
<accession>A8B479</accession>
<keyword id="KW-0007">Acetylation</keyword>
<keyword id="KW-0106">Calcium</keyword>
<keyword id="KW-0903">Direct protein sequencing</keyword>
<keyword id="KW-0256">Endoplasmic reticulum</keyword>
<keyword id="KW-0551">Lipid droplet</keyword>
<keyword id="KW-0472">Membrane</keyword>
<keyword id="KW-0479">Metal-binding</keyword>
<keyword id="KW-0492">Microsome</keyword>
<keyword id="KW-0560">Oxidoreductase</keyword>
<comment type="function">
    <text evidence="2">Calcium-binding peroxygenase involved in the degradation of storage lipid in oil bodies.</text>
</comment>
<comment type="catalytic activity">
    <reaction evidence="2">
        <text>RH + ROOH = ROH + ROH.</text>
        <dbReference type="EC" id="1.11.2.3"/>
    </reaction>
</comment>
<comment type="cofactor">
    <cofactor evidence="2">
        <name>heme b</name>
        <dbReference type="ChEBI" id="CHEBI:60344"/>
    </cofactor>
    <text evidence="2">Binds 1 heme b (iron(II)-protoporphyrin IX) group.</text>
</comment>
<comment type="cofactor">
    <cofactor evidence="1">
        <name>Ca(2+)</name>
        <dbReference type="ChEBI" id="CHEBI:29108"/>
    </cofactor>
</comment>
<comment type="subunit">
    <text evidence="2">Homodimer.</text>
</comment>
<comment type="subcellular location">
    <subcellularLocation>
        <location evidence="6">Lipid droplet</location>
    </subcellularLocation>
    <subcellularLocation>
        <location evidence="3">Microsome membrane</location>
    </subcellularLocation>
</comment>
<comment type="tissue specificity">
    <text evidence="6">Expressed in pollen (at protein level). Not expressed in leaf, root, stem, tepal, ovary, style, filament or stigma (at protein level).</text>
</comment>
<comment type="domain">
    <text evidence="8">Transmembrane regions are predicted by sequence analysis tools, but these regions probably constitute hydrophobic domains associated to phospholipids.</text>
</comment>
<comment type="domain">
    <text evidence="9">The proline-knot motif may be involved in targeting to lipid bodies.</text>
</comment>
<comment type="similarity">
    <text evidence="8">Belongs to the caleosin family.</text>
</comment>